<reference key="1">
    <citation type="journal article" date="2004" name="Genome Res.">
        <title>The status, quality, and expansion of the NIH full-length cDNA project: the Mammalian Gene Collection (MGC).</title>
        <authorList>
            <consortium name="The MGC Project Team"/>
        </authorList>
    </citation>
    <scope>NUCLEOTIDE SEQUENCE [LARGE SCALE MRNA]</scope>
    <source>
        <tissue>Lung</tissue>
    </source>
</reference>
<reference key="2">
    <citation type="journal article" date="2009" name="J. Mol. Biol.">
        <title>Mammalian OS-9 is upregulated in response to endoplasmic reticulum stress and facilitates ubiquitination of misfolded glycoproteins.</title>
        <authorList>
            <person name="Alcock F."/>
            <person name="Swanton E."/>
        </authorList>
    </citation>
    <scope>TOPOLOGY</scope>
</reference>
<name>OS9_RAT</name>
<proteinExistence type="evidence at protein level"/>
<keyword id="KW-1015">Disulfide bond</keyword>
<keyword id="KW-0256">Endoplasmic reticulum</keyword>
<keyword id="KW-0325">Glycoprotein</keyword>
<keyword id="KW-0430">Lectin</keyword>
<keyword id="KW-1185">Reference proteome</keyword>
<keyword id="KW-0732">Signal</keyword>
<evidence type="ECO:0000250" key="1">
    <source>
        <dbReference type="UniProtKB" id="Q13438"/>
    </source>
</evidence>
<evidence type="ECO:0000250" key="2">
    <source>
        <dbReference type="UniProtKB" id="Q8K2C7"/>
    </source>
</evidence>
<evidence type="ECO:0000255" key="3"/>
<evidence type="ECO:0000255" key="4">
    <source>
        <dbReference type="PROSITE-ProRule" id="PRU01262"/>
    </source>
</evidence>
<evidence type="ECO:0000256" key="5">
    <source>
        <dbReference type="SAM" id="MobiDB-lite"/>
    </source>
</evidence>
<evidence type="ECO:0000305" key="6"/>
<comment type="function">
    <text evidence="1">Lectin component of the HRD1 complex, which functions in endoplasmic reticulum (ER) quality control and ER-associated degradation (ERAD). Specifically recognizes and binds improperly folded glycoproteins as well as hyperglycosylated proteins, retain them in the ER, and transfers them to the ubiquitination machinery and promote their degradation. Possible targets include TRPV4 as well as hyperglycosylated HSP90B1.</text>
</comment>
<comment type="subunit">
    <text evidence="1 2">Component of the HRD1 complex, which comprises at least SYNV1/HRD1, DERL1/2, FAM8A1, HERPUD1/HERP, OS9, SEL1L and UBE2J1. FAM8A1 is stabilized by interaction with SYNV1, which prevents its proteasomal degradation. OS9 and UBE2J1 recruitment to the complex may be mediated by SEL1L. Through this complex, may interact with ERLEC1 and HSPA5 (By similarity). Interacts (via C-terminus) with CPNE6 (via second C2 domain); this interaction occurs in a calcium-dependent manner in vitro (By similarity). Interacts with CREB3 (By similarity).</text>
</comment>
<comment type="subcellular location">
    <subcellularLocation>
        <location evidence="1">Endoplasmic reticulum lumen</location>
    </subcellularLocation>
</comment>
<comment type="PTM">
    <text evidence="1">Intramolecular disulfide bonds.</text>
</comment>
<comment type="similarity">
    <text evidence="6">Belongs to the OS-9 family.</text>
</comment>
<accession>Q5RKH6</accession>
<feature type="signal peptide" evidence="3">
    <location>
        <begin position="1"/>
        <end position="30"/>
    </location>
</feature>
<feature type="chain" id="PRO_0000386450" description="Protein OS-9">
    <location>
        <begin position="31"/>
        <end position="666"/>
    </location>
</feature>
<feature type="domain" description="MRH" evidence="4">
    <location>
        <begin position="108"/>
        <end position="230"/>
    </location>
</feature>
<feature type="region of interest" description="Disordered" evidence="5">
    <location>
        <begin position="261"/>
        <end position="356"/>
    </location>
</feature>
<feature type="region of interest" description="Disordered" evidence="5">
    <location>
        <begin position="370"/>
        <end position="449"/>
    </location>
</feature>
<feature type="region of interest" description="Disordered" evidence="5">
    <location>
        <begin position="505"/>
        <end position="540"/>
    </location>
</feature>
<feature type="region of interest" description="Disordered" evidence="5">
    <location>
        <begin position="631"/>
        <end position="666"/>
    </location>
</feature>
<feature type="compositionally biased region" description="Basic and acidic residues" evidence="5">
    <location>
        <begin position="263"/>
        <end position="281"/>
    </location>
</feature>
<feature type="compositionally biased region" description="Basic and acidic residues" evidence="5">
    <location>
        <begin position="294"/>
        <end position="310"/>
    </location>
</feature>
<feature type="compositionally biased region" description="Low complexity" evidence="5">
    <location>
        <begin position="320"/>
        <end position="332"/>
    </location>
</feature>
<feature type="compositionally biased region" description="Basic and acidic residues" evidence="5">
    <location>
        <begin position="370"/>
        <end position="379"/>
    </location>
</feature>
<feature type="compositionally biased region" description="Basic and acidic residues" evidence="5">
    <location>
        <begin position="395"/>
        <end position="412"/>
    </location>
</feature>
<feature type="compositionally biased region" description="Acidic residues" evidence="5">
    <location>
        <begin position="413"/>
        <end position="429"/>
    </location>
</feature>
<feature type="compositionally biased region" description="Basic and acidic residues" evidence="5">
    <location>
        <begin position="434"/>
        <end position="449"/>
    </location>
</feature>
<feature type="compositionally biased region" description="Basic and acidic residues" evidence="5">
    <location>
        <begin position="631"/>
        <end position="646"/>
    </location>
</feature>
<feature type="compositionally biased region" description="Acidic residues" evidence="5">
    <location>
        <begin position="657"/>
        <end position="666"/>
    </location>
</feature>
<feature type="binding site" evidence="1">
    <location>
        <position position="117"/>
    </location>
    <ligand>
        <name>a mannooligosaccharide derivative</name>
        <dbReference type="ChEBI" id="CHEBI:71274"/>
    </ligand>
</feature>
<feature type="binding site" evidence="1">
    <location>
        <position position="118"/>
    </location>
    <ligand>
        <name>a mannooligosaccharide derivative</name>
        <dbReference type="ChEBI" id="CHEBI:71274"/>
    </ligand>
</feature>
<feature type="binding site" evidence="1">
    <location>
        <position position="130"/>
    </location>
    <ligand>
        <name>a mannooligosaccharide derivative</name>
        <dbReference type="ChEBI" id="CHEBI:71274"/>
    </ligand>
</feature>
<feature type="binding site" evidence="1">
    <location>
        <position position="182"/>
    </location>
    <ligand>
        <name>a mannooligosaccharide derivative</name>
        <dbReference type="ChEBI" id="CHEBI:71274"/>
    </ligand>
</feature>
<feature type="binding site" evidence="1">
    <location>
        <position position="188"/>
    </location>
    <ligand>
        <name>a mannooligosaccharide derivative</name>
        <dbReference type="ChEBI" id="CHEBI:71274"/>
    </ligand>
</feature>
<feature type="binding site" evidence="1">
    <location>
        <position position="212"/>
    </location>
    <ligand>
        <name>a mannooligosaccharide derivative</name>
        <dbReference type="ChEBI" id="CHEBI:71274"/>
    </ligand>
</feature>
<feature type="binding site" evidence="1">
    <location>
        <position position="218"/>
    </location>
    <ligand>
        <name>a mannooligosaccharide derivative</name>
        <dbReference type="ChEBI" id="CHEBI:71274"/>
    </ligand>
</feature>
<feature type="glycosylation site" description="N-linked (GlcNAc...) asparagine" evidence="3">
    <location>
        <position position="177"/>
    </location>
</feature>
<feature type="disulfide bond" evidence="4">
    <location>
        <begin position="110"/>
        <end position="123"/>
    </location>
</feature>
<feature type="disulfide bond" evidence="4">
    <location>
        <begin position="181"/>
        <end position="216"/>
    </location>
</feature>
<feature type="disulfide bond" evidence="4">
    <location>
        <begin position="196"/>
        <end position="228"/>
    </location>
</feature>
<sequence length="666" mass="75365">MAAEALLSSLLGLLFLGLLLPAHLTGGVGSLNLEELSEMRYGIQILPLPVMGGQSQASDVVVVSSKYKQRYECRLPAGAIHFQREREEETPAYQGPGIPELLSPMRDAPCLLKTKDWWTYEFCYGRHIQQYHMEDSEIKGDVLYLGYYQSAFNWDDETAKASKQHRLKRYHSQTYGNGSKCDLNGKPREAEVRFLCDEGAGISGDYIDRVDEPFSCSYVLSIRTSRLCPHPLLRPPASAAPQAILCHPALQPDEYMAYLQRQAESKQHEEKVTEEVQDTDHQVWSGSKAAGAPPKKEDVSPTKEDKESEFWKMLQEPEEQATGTEEAQAGEQDLNHEAAADPAPAPPTDFQNNVQVKLIRSPADLIRLIEELKGAEKGKPSVRQEQPGDDTTEAPQREAEAKGKGGEPRGLVEEEDGDEEEEDEDEDEQQLLGEFEKELEGMLLPSDRERLRSEVKAGMERELENIIQETEKELDPEGLRKESEREQAILALTSTLDKLIKRLQESQSPELVQKYKKRRVVPQKPPPSPHPTEEEPEHRVRVRVTKLRHGGPNQDLTVLEMNRENPQLKQIEGLVTEVLEREGLTAEGKIEIKIVRPGAEGKEEDTRWLTDEDTRNLKEIFFNILVQGAEEANKERQRQSELESNYRRVWGSPGGEDTGDLDEFDF</sequence>
<gene>
    <name type="primary">Os9</name>
</gene>
<dbReference type="EMBL" id="BC085907">
    <property type="protein sequence ID" value="AAH85907.1"/>
    <property type="molecule type" value="mRNA"/>
</dbReference>
<dbReference type="RefSeq" id="NP_001007266.1">
    <property type="nucleotide sequence ID" value="NM_001007265.1"/>
</dbReference>
<dbReference type="SMR" id="Q5RKH6"/>
<dbReference type="BioGRID" id="263807">
    <property type="interactions" value="2"/>
</dbReference>
<dbReference type="CORUM" id="Q5RKH6"/>
<dbReference type="FunCoup" id="Q5RKH6">
    <property type="interactions" value="1353"/>
</dbReference>
<dbReference type="STRING" id="10116.ENSRNOP00000044914"/>
<dbReference type="GlyCosmos" id="Q5RKH6">
    <property type="glycosylation" value="1 site, No reported glycans"/>
</dbReference>
<dbReference type="GlyGen" id="Q5RKH6">
    <property type="glycosylation" value="1 site"/>
</dbReference>
<dbReference type="PhosphoSitePlus" id="Q5RKH6"/>
<dbReference type="jPOST" id="Q5RKH6"/>
<dbReference type="PaxDb" id="10116-ENSRNOP00000044914"/>
<dbReference type="Ensembl" id="ENSRNOT00000049895.4">
    <property type="protein sequence ID" value="ENSRNOP00000044914.2"/>
    <property type="gene ID" value="ENSRNOG00000025570.6"/>
</dbReference>
<dbReference type="GeneID" id="362891"/>
<dbReference type="KEGG" id="rno:362891"/>
<dbReference type="UCSC" id="RGD:1359574">
    <property type="organism name" value="rat"/>
</dbReference>
<dbReference type="AGR" id="RGD:1359574"/>
<dbReference type="CTD" id="10956"/>
<dbReference type="RGD" id="1359574">
    <property type="gene designation" value="Os9"/>
</dbReference>
<dbReference type="eggNOG" id="KOG3394">
    <property type="taxonomic scope" value="Eukaryota"/>
</dbReference>
<dbReference type="GeneTree" id="ENSGT00530000063603"/>
<dbReference type="HOGENOM" id="CLU_026715_0_0_1"/>
<dbReference type="InParanoid" id="Q5RKH6"/>
<dbReference type="OMA" id="WLKRLYV"/>
<dbReference type="OrthoDB" id="448954at2759"/>
<dbReference type="PhylomeDB" id="Q5RKH6"/>
<dbReference type="TreeFam" id="TF314309"/>
<dbReference type="Reactome" id="R-RNO-382556">
    <property type="pathway name" value="ABC-family proteins mediated transport"/>
</dbReference>
<dbReference type="Reactome" id="R-RNO-5358346">
    <property type="pathway name" value="Hedgehog ligand biogenesis"/>
</dbReference>
<dbReference type="PRO" id="PR:Q5RKH6"/>
<dbReference type="Proteomes" id="UP000002494">
    <property type="component" value="Chromosome 7"/>
</dbReference>
<dbReference type="Bgee" id="ENSRNOG00000025570">
    <property type="expression patterns" value="Expressed in pancreas and 20 other cell types or tissues"/>
</dbReference>
<dbReference type="GO" id="GO:0005788">
    <property type="term" value="C:endoplasmic reticulum lumen"/>
    <property type="evidence" value="ECO:0000314"/>
    <property type="project" value="UniProtKB"/>
</dbReference>
<dbReference type="GO" id="GO:0000836">
    <property type="term" value="C:Hrd1p ubiquitin ligase complex"/>
    <property type="evidence" value="ECO:0000266"/>
    <property type="project" value="RGD"/>
</dbReference>
<dbReference type="GO" id="GO:0030246">
    <property type="term" value="F:carbohydrate binding"/>
    <property type="evidence" value="ECO:0007669"/>
    <property type="project" value="UniProtKB-KW"/>
</dbReference>
<dbReference type="GO" id="GO:0140032">
    <property type="term" value="F:glycosylation-dependent protein binding"/>
    <property type="evidence" value="ECO:0000266"/>
    <property type="project" value="RGD"/>
</dbReference>
<dbReference type="GO" id="GO:0002020">
    <property type="term" value="F:protease binding"/>
    <property type="evidence" value="ECO:0000353"/>
    <property type="project" value="RGD"/>
</dbReference>
<dbReference type="GO" id="GO:0030968">
    <property type="term" value="P:endoplasmic reticulum unfolded protein response"/>
    <property type="evidence" value="ECO:0007669"/>
    <property type="project" value="InterPro"/>
</dbReference>
<dbReference type="GO" id="GO:0036503">
    <property type="term" value="P:ERAD pathway"/>
    <property type="evidence" value="ECO:0000250"/>
    <property type="project" value="UniProtKB"/>
</dbReference>
<dbReference type="GO" id="GO:1904153">
    <property type="term" value="P:negative regulation of retrograde protein transport, ER to cytosol"/>
    <property type="evidence" value="ECO:0000266"/>
    <property type="project" value="RGD"/>
</dbReference>
<dbReference type="GO" id="GO:0006621">
    <property type="term" value="P:protein retention in ER lumen"/>
    <property type="evidence" value="ECO:0000250"/>
    <property type="project" value="UniProtKB"/>
</dbReference>
<dbReference type="GO" id="GO:0006605">
    <property type="term" value="P:protein targeting"/>
    <property type="evidence" value="ECO:0000314"/>
    <property type="project" value="RGD"/>
</dbReference>
<dbReference type="GO" id="GO:0016567">
    <property type="term" value="P:protein ubiquitination"/>
    <property type="evidence" value="ECO:0000266"/>
    <property type="project" value="RGD"/>
</dbReference>
<dbReference type="GO" id="GO:0034976">
    <property type="term" value="P:response to endoplasmic reticulum stress"/>
    <property type="evidence" value="ECO:0000266"/>
    <property type="project" value="RGD"/>
</dbReference>
<dbReference type="GO" id="GO:0030970">
    <property type="term" value="P:retrograde protein transport, ER to cytosol"/>
    <property type="evidence" value="ECO:0000318"/>
    <property type="project" value="GO_Central"/>
</dbReference>
<dbReference type="GO" id="GO:0006511">
    <property type="term" value="P:ubiquitin-dependent protein catabolic process"/>
    <property type="evidence" value="ECO:0000250"/>
    <property type="project" value="UniProtKB"/>
</dbReference>
<dbReference type="FunFam" id="2.70.130.10:FF:000002">
    <property type="entry name" value="protein OS-9 isoform X1"/>
    <property type="match status" value="1"/>
</dbReference>
<dbReference type="Gene3D" id="2.70.130.10">
    <property type="entry name" value="Mannose-6-phosphate receptor binding domain"/>
    <property type="match status" value="1"/>
</dbReference>
<dbReference type="InterPro" id="IPR009011">
    <property type="entry name" value="Man6P_isomerase_rcpt-bd_dom_sf"/>
</dbReference>
<dbReference type="InterPro" id="IPR044865">
    <property type="entry name" value="MRH_dom"/>
</dbReference>
<dbReference type="InterPro" id="IPR045149">
    <property type="entry name" value="OS-9-like"/>
</dbReference>
<dbReference type="InterPro" id="IPR012913">
    <property type="entry name" value="OS9-like_dom"/>
</dbReference>
<dbReference type="PANTHER" id="PTHR15414">
    <property type="entry name" value="OS-9-RELATED"/>
    <property type="match status" value="1"/>
</dbReference>
<dbReference type="PANTHER" id="PTHR15414:SF5">
    <property type="entry name" value="PROTEIN OS-9"/>
    <property type="match status" value="1"/>
</dbReference>
<dbReference type="Pfam" id="PF07915">
    <property type="entry name" value="PRKCSH"/>
    <property type="match status" value="1"/>
</dbReference>
<dbReference type="SUPFAM" id="SSF50911">
    <property type="entry name" value="Mannose 6-phosphate receptor domain"/>
    <property type="match status" value="1"/>
</dbReference>
<dbReference type="PROSITE" id="PS51914">
    <property type="entry name" value="MRH"/>
    <property type="match status" value="1"/>
</dbReference>
<organism>
    <name type="scientific">Rattus norvegicus</name>
    <name type="common">Rat</name>
    <dbReference type="NCBI Taxonomy" id="10116"/>
    <lineage>
        <taxon>Eukaryota</taxon>
        <taxon>Metazoa</taxon>
        <taxon>Chordata</taxon>
        <taxon>Craniata</taxon>
        <taxon>Vertebrata</taxon>
        <taxon>Euteleostomi</taxon>
        <taxon>Mammalia</taxon>
        <taxon>Eutheria</taxon>
        <taxon>Euarchontoglires</taxon>
        <taxon>Glires</taxon>
        <taxon>Rodentia</taxon>
        <taxon>Myomorpha</taxon>
        <taxon>Muroidea</taxon>
        <taxon>Muridae</taxon>
        <taxon>Murinae</taxon>
        <taxon>Rattus</taxon>
    </lineage>
</organism>
<protein>
    <recommendedName>
        <fullName>Protein OS-9</fullName>
    </recommendedName>
</protein>